<comment type="function">
    <text evidence="6">ATP-dependent chromatin-remodeling factor which acts in nucleosome-remodeling by catalyzing ATP-dependent nucleosome mobilization (PubMed:18250149). Likely to be involved in the regulation of transcription (PubMed:18250149).</text>
</comment>
<comment type="catalytic activity">
    <reaction evidence="6">
        <text>ATP + H2O = ADP + phosphate + H(+)</text>
        <dbReference type="Rhea" id="RHEA:13065"/>
        <dbReference type="ChEBI" id="CHEBI:15377"/>
        <dbReference type="ChEBI" id="CHEBI:15378"/>
        <dbReference type="ChEBI" id="CHEBI:30616"/>
        <dbReference type="ChEBI" id="CHEBI:43474"/>
        <dbReference type="ChEBI" id="CHEBI:456216"/>
    </reaction>
</comment>
<comment type="activity regulation">
    <text evidence="6">ATPase activity is stimulated by binding to DNA or nucleosomes, but is strongly activated by nucleosomes.</text>
</comment>
<comment type="subunit">
    <text evidence="6">Monomer.</text>
</comment>
<comment type="subcellular location">
    <subcellularLocation>
        <location evidence="6">Nucleus</location>
    </subcellularLocation>
    <subcellularLocation>
        <location evidence="6">Chromosome</location>
    </subcellularLocation>
    <text evidence="6">During embryogenesis, detected in nuclei before and after their migration to the membrane of the preblastoderm embryo (PubMed:18250149). Remains associated with condensed chromosomes in mitotic nuclei. Not detected in nuclei postgastrulation (PubMed:18250149). In polytene chromosomes of third instar larvae, weakly expressed at the chromocenter and fourth chromosome localizing mainly to the interbands (PubMed:18250149).</text>
</comment>
<comment type="developmental stage">
    <text evidence="6">Strongly expressed in early embryos 0 to 3 hours after egg deposition (at protein level) (PubMed:18250149). Expression then decreases and is undetectable in larvae and pupae (at protein level) (PubMed:18250149). Strongly expressed in adult females but expression is absent in adult males (at protein level) (PubMed:18250149).</text>
</comment>
<comment type="similarity">
    <text evidence="8">Belongs to the SNF2/RAD54 helicase family.</text>
</comment>
<comment type="sequence caution" evidence="8">
    <conflict type="miscellaneous discrepancy">
        <sequence resource="EMBL-CDS" id="AAB87384"/>
    </conflict>
    <text>Cloning artifacts.</text>
</comment>
<comment type="sequence caution" evidence="8">
    <conflict type="erroneous termination">
        <sequence resource="EMBL-CDS" id="AAL49125"/>
    </conflict>
    <text>Truncated C-terminus.</text>
</comment>
<comment type="sequence caution" evidence="8">
    <conflict type="frameshift">
        <sequence resource="EMBL-CDS" id="AAL49125"/>
    </conflict>
</comment>
<gene>
    <name evidence="7 11" type="primary">Chd3</name>
    <name evidence="11" type="ORF">CG9594</name>
</gene>
<name>CHD3_DROME</name>
<feature type="chain" id="PRO_0000080235" description="Chromodomain-helicase-DNA-binding protein 3">
    <location>
        <begin position="1"/>
        <end position="892"/>
    </location>
</feature>
<feature type="domain" description="Chromo 1" evidence="1">
    <location>
        <begin position="84"/>
        <end position="156"/>
    </location>
</feature>
<feature type="domain" description="Chromo 2" evidence="1">
    <location>
        <begin position="179"/>
        <end position="240"/>
    </location>
</feature>
<feature type="domain" description="Helicase ATP-binding" evidence="3">
    <location>
        <begin position="279"/>
        <end position="458"/>
    </location>
</feature>
<feature type="domain" description="Helicase C-terminal" evidence="4">
    <location>
        <begin position="590"/>
        <end position="739"/>
    </location>
</feature>
<feature type="zinc finger region" description="PHD-type" evidence="2">
    <location>
        <begin position="35"/>
        <end position="82"/>
    </location>
</feature>
<feature type="region of interest" description="Disordered" evidence="5">
    <location>
        <begin position="1"/>
        <end position="29"/>
    </location>
</feature>
<feature type="region of interest" description="Disordered" evidence="5">
    <location>
        <begin position="839"/>
        <end position="892"/>
    </location>
</feature>
<feature type="short sequence motif" description="DEAH box">
    <location>
        <begin position="409"/>
        <end position="412"/>
    </location>
</feature>
<feature type="compositionally biased region" description="Basic and acidic residues" evidence="5">
    <location>
        <begin position="1"/>
        <end position="20"/>
    </location>
</feature>
<feature type="compositionally biased region" description="Polar residues" evidence="5">
    <location>
        <begin position="874"/>
        <end position="892"/>
    </location>
</feature>
<feature type="binding site" evidence="3 8">
    <location>
        <begin position="292"/>
        <end position="299"/>
    </location>
    <ligand>
        <name>ATP</name>
        <dbReference type="ChEBI" id="CHEBI:30616"/>
    </ligand>
</feature>
<feature type="mutagenesis site" description="Abolishes nucleosome mobilization. Retains ATPase activity but is unable to bind DNA or mononucleosomes." evidence="6">
    <location>
        <begin position="1"/>
        <end position="240"/>
    </location>
</feature>
<feature type="mutagenesis site" description="No effect on ATPase activity or nucleosome mobilization, and is able to bind DNA and mononucleosomes." evidence="6">
    <location>
        <begin position="1"/>
        <end position="80"/>
    </location>
</feature>
<feature type="mutagenesis site" description="No effect on ATPase activity or nucleosome mobilization, and is able to bind DNA and mononucleosomes." evidence="6">
    <location>
        <begin position="801"/>
        <end position="892"/>
    </location>
</feature>
<feature type="sequence conflict" description="In Ref. 4; AAB87384." evidence="8" ref="4">
    <original>V</original>
    <variation>I</variation>
    <location>
        <position position="617"/>
    </location>
</feature>
<organism evidence="10">
    <name type="scientific">Drosophila melanogaster</name>
    <name type="common">Fruit fly</name>
    <dbReference type="NCBI Taxonomy" id="7227"/>
    <lineage>
        <taxon>Eukaryota</taxon>
        <taxon>Metazoa</taxon>
        <taxon>Ecdysozoa</taxon>
        <taxon>Arthropoda</taxon>
        <taxon>Hexapoda</taxon>
        <taxon>Insecta</taxon>
        <taxon>Pterygota</taxon>
        <taxon>Neoptera</taxon>
        <taxon>Endopterygota</taxon>
        <taxon>Diptera</taxon>
        <taxon>Brachycera</taxon>
        <taxon>Muscomorpha</taxon>
        <taxon>Ephydroidea</taxon>
        <taxon>Drosophilidae</taxon>
        <taxon>Drosophila</taxon>
        <taxon>Sophophora</taxon>
    </lineage>
</organism>
<accession>O16102</accession>
<accession>Q8SYJ8</accession>
<accession>Q9VVZ3</accession>
<proteinExistence type="evidence at protein level"/>
<sequence length="892" mass="103022">MSSKRGADPDWKTPGKASKDKRPKTNAKKQKFRDEEYCKVCSDGGDLLCCDSCPSVYHRTCLSPPLKSIPKGDWICPRCIPLPGKAEKILSWRWALDRSVELRTSKGEKRREYFIKWHGMSYWHCEWIPEGQMLLHHASMVASFQRRSDMEEPSLEELDDQDGNLHERFYRYGIKPEWLLVQRVINHSEEPNGGTMYLVKWRELSYNDSSWERESDSIPGLNQAIALYKKLRSSNKGRQRDRPAPTIDLNKKYEDQPVFLKEAGLKLHPFQIEGVSWLRYSWGQGIPTILADEMGLGKTIQTVVFLYSLFKEGHCRGPFLISVPLSTLTNWERELELWAPELYCVTYVGGKTARAVIRKHEISFEEVTTKTMRENQTQYKFNVMLTSYEFISVDAAFLGCIDWAALVVDEAHRLRSNQSKFFRILSKYRIGYKLLLTGTPLQNNLEELFHLLNFLSSGKFNDLQTFQAEFTDVSKEEQVKRLHEILEPHMLRRLKADVLKSMPPKSEFIVRVELSSMQKKFYKHILTKNFKALNQKGGGRVCSLLNIMMDLRKCCNHPYLFPSAAEEATISPSGLYEMSSLTKASGKLDLLSKMLKQLKADNHRVLLFSQMTKMLNVLEHFLEGEGYQYDRIDGSIKGDLRQKAIDRFNDPVSEHFVFLLSTRAGGLGINLATADTVIIFDSDWNPHNDVQAFSRAHRMGQKKKVMIYRFVTHNSVEERIMQVAKHKMMLTHLVVRPGMGGMTTNFSKDELEDILRFGTEDLFKDGKSEAIHYDDKAVADLLDRTNRGIEEKESWANEYLSSFKVASYATKEDHEEHDDYNNDAENTDPFYWENLMGKSQPKLPKKQKKQSQQSQVDVESIMGKGKRIRKEIDYSNQYPSPNRATPSSIVLM</sequence>
<evidence type="ECO:0000255" key="1">
    <source>
        <dbReference type="PROSITE-ProRule" id="PRU00053"/>
    </source>
</evidence>
<evidence type="ECO:0000255" key="2">
    <source>
        <dbReference type="PROSITE-ProRule" id="PRU00146"/>
    </source>
</evidence>
<evidence type="ECO:0000255" key="3">
    <source>
        <dbReference type="PROSITE-ProRule" id="PRU00541"/>
    </source>
</evidence>
<evidence type="ECO:0000255" key="4">
    <source>
        <dbReference type="PROSITE-ProRule" id="PRU00542"/>
    </source>
</evidence>
<evidence type="ECO:0000256" key="5">
    <source>
        <dbReference type="SAM" id="MobiDB-lite"/>
    </source>
</evidence>
<evidence type="ECO:0000269" key="6">
    <source>
    </source>
</evidence>
<evidence type="ECO:0000303" key="7">
    <source>
    </source>
</evidence>
<evidence type="ECO:0000305" key="8"/>
<evidence type="ECO:0000305" key="9">
    <source>
    </source>
</evidence>
<evidence type="ECO:0000312" key="10">
    <source>
        <dbReference type="EMBL" id="AAF49162.2"/>
    </source>
</evidence>
<evidence type="ECO:0000312" key="11">
    <source>
        <dbReference type="FlyBase" id="FBgn0023395"/>
    </source>
</evidence>
<reference evidence="8" key="1">
    <citation type="journal article" date="2000" name="Science">
        <title>The genome sequence of Drosophila melanogaster.</title>
        <authorList>
            <person name="Adams M.D."/>
            <person name="Celniker S.E."/>
            <person name="Holt R.A."/>
            <person name="Evans C.A."/>
            <person name="Gocayne J.D."/>
            <person name="Amanatides P.G."/>
            <person name="Scherer S.E."/>
            <person name="Li P.W."/>
            <person name="Hoskins R.A."/>
            <person name="Galle R.F."/>
            <person name="George R.A."/>
            <person name="Lewis S.E."/>
            <person name="Richards S."/>
            <person name="Ashburner M."/>
            <person name="Henderson S.N."/>
            <person name="Sutton G.G."/>
            <person name="Wortman J.R."/>
            <person name="Yandell M.D."/>
            <person name="Zhang Q."/>
            <person name="Chen L.X."/>
            <person name="Brandon R.C."/>
            <person name="Rogers Y.-H.C."/>
            <person name="Blazej R.G."/>
            <person name="Champe M."/>
            <person name="Pfeiffer B.D."/>
            <person name="Wan K.H."/>
            <person name="Doyle C."/>
            <person name="Baxter E.G."/>
            <person name="Helt G."/>
            <person name="Nelson C.R."/>
            <person name="Miklos G.L.G."/>
            <person name="Abril J.F."/>
            <person name="Agbayani A."/>
            <person name="An H.-J."/>
            <person name="Andrews-Pfannkoch C."/>
            <person name="Baldwin D."/>
            <person name="Ballew R.M."/>
            <person name="Basu A."/>
            <person name="Baxendale J."/>
            <person name="Bayraktaroglu L."/>
            <person name="Beasley E.M."/>
            <person name="Beeson K.Y."/>
            <person name="Benos P.V."/>
            <person name="Berman B.P."/>
            <person name="Bhandari D."/>
            <person name="Bolshakov S."/>
            <person name="Borkova D."/>
            <person name="Botchan M.R."/>
            <person name="Bouck J."/>
            <person name="Brokstein P."/>
            <person name="Brottier P."/>
            <person name="Burtis K.C."/>
            <person name="Busam D.A."/>
            <person name="Butler H."/>
            <person name="Cadieu E."/>
            <person name="Center A."/>
            <person name="Chandra I."/>
            <person name="Cherry J.M."/>
            <person name="Cawley S."/>
            <person name="Dahlke C."/>
            <person name="Davenport L.B."/>
            <person name="Davies P."/>
            <person name="de Pablos B."/>
            <person name="Delcher A."/>
            <person name="Deng Z."/>
            <person name="Mays A.D."/>
            <person name="Dew I."/>
            <person name="Dietz S.M."/>
            <person name="Dodson K."/>
            <person name="Doup L.E."/>
            <person name="Downes M."/>
            <person name="Dugan-Rocha S."/>
            <person name="Dunkov B.C."/>
            <person name="Dunn P."/>
            <person name="Durbin K.J."/>
            <person name="Evangelista C.C."/>
            <person name="Ferraz C."/>
            <person name="Ferriera S."/>
            <person name="Fleischmann W."/>
            <person name="Fosler C."/>
            <person name="Gabrielian A.E."/>
            <person name="Garg N.S."/>
            <person name="Gelbart W.M."/>
            <person name="Glasser K."/>
            <person name="Glodek A."/>
            <person name="Gong F."/>
            <person name="Gorrell J.H."/>
            <person name="Gu Z."/>
            <person name="Guan P."/>
            <person name="Harris M."/>
            <person name="Harris N.L."/>
            <person name="Harvey D.A."/>
            <person name="Heiman T.J."/>
            <person name="Hernandez J.R."/>
            <person name="Houck J."/>
            <person name="Hostin D."/>
            <person name="Houston K.A."/>
            <person name="Howland T.J."/>
            <person name="Wei M.-H."/>
            <person name="Ibegwam C."/>
            <person name="Jalali M."/>
            <person name="Kalush F."/>
            <person name="Karpen G.H."/>
            <person name="Ke Z."/>
            <person name="Kennison J.A."/>
            <person name="Ketchum K.A."/>
            <person name="Kimmel B.E."/>
            <person name="Kodira C.D."/>
            <person name="Kraft C.L."/>
            <person name="Kravitz S."/>
            <person name="Kulp D."/>
            <person name="Lai Z."/>
            <person name="Lasko P."/>
            <person name="Lei Y."/>
            <person name="Levitsky A.A."/>
            <person name="Li J.H."/>
            <person name="Li Z."/>
            <person name="Liang Y."/>
            <person name="Lin X."/>
            <person name="Liu X."/>
            <person name="Mattei B."/>
            <person name="McIntosh T.C."/>
            <person name="McLeod M.P."/>
            <person name="McPherson D."/>
            <person name="Merkulov G."/>
            <person name="Milshina N.V."/>
            <person name="Mobarry C."/>
            <person name="Morris J."/>
            <person name="Moshrefi A."/>
            <person name="Mount S.M."/>
            <person name="Moy M."/>
            <person name="Murphy B."/>
            <person name="Murphy L."/>
            <person name="Muzny D.M."/>
            <person name="Nelson D.L."/>
            <person name="Nelson D.R."/>
            <person name="Nelson K.A."/>
            <person name="Nixon K."/>
            <person name="Nusskern D.R."/>
            <person name="Pacleb J.M."/>
            <person name="Palazzolo M."/>
            <person name="Pittman G.S."/>
            <person name="Pan S."/>
            <person name="Pollard J."/>
            <person name="Puri V."/>
            <person name="Reese M.G."/>
            <person name="Reinert K."/>
            <person name="Remington K."/>
            <person name="Saunders R.D.C."/>
            <person name="Scheeler F."/>
            <person name="Shen H."/>
            <person name="Shue B.C."/>
            <person name="Siden-Kiamos I."/>
            <person name="Simpson M."/>
            <person name="Skupski M.P."/>
            <person name="Smith T.J."/>
            <person name="Spier E."/>
            <person name="Spradling A.C."/>
            <person name="Stapleton M."/>
            <person name="Strong R."/>
            <person name="Sun E."/>
            <person name="Svirskas R."/>
            <person name="Tector C."/>
            <person name="Turner R."/>
            <person name="Venter E."/>
            <person name="Wang A.H."/>
            <person name="Wang X."/>
            <person name="Wang Z.-Y."/>
            <person name="Wassarman D.A."/>
            <person name="Weinstock G.M."/>
            <person name="Weissenbach J."/>
            <person name="Williams S.M."/>
            <person name="Woodage T."/>
            <person name="Worley K.C."/>
            <person name="Wu D."/>
            <person name="Yang S."/>
            <person name="Yao Q.A."/>
            <person name="Ye J."/>
            <person name="Yeh R.-F."/>
            <person name="Zaveri J.S."/>
            <person name="Zhan M."/>
            <person name="Zhang G."/>
            <person name="Zhao Q."/>
            <person name="Zheng L."/>
            <person name="Zheng X.H."/>
            <person name="Zhong F.N."/>
            <person name="Zhong W."/>
            <person name="Zhou X."/>
            <person name="Zhu S.C."/>
            <person name="Zhu X."/>
            <person name="Smith H.O."/>
            <person name="Gibbs R.A."/>
            <person name="Myers E.W."/>
            <person name="Rubin G.M."/>
            <person name="Venter J.C."/>
        </authorList>
    </citation>
    <scope>NUCLEOTIDE SEQUENCE [LARGE SCALE GENOMIC DNA]</scope>
    <source>
        <strain>Berkeley</strain>
    </source>
</reference>
<reference key="2">
    <citation type="journal article" date="2002" name="Genome Biol.">
        <title>Annotation of the Drosophila melanogaster euchromatic genome: a systematic review.</title>
        <authorList>
            <person name="Misra S."/>
            <person name="Crosby M.A."/>
            <person name="Mungall C.J."/>
            <person name="Matthews B.B."/>
            <person name="Campbell K.S."/>
            <person name="Hradecky P."/>
            <person name="Huang Y."/>
            <person name="Kaminker J.S."/>
            <person name="Millburn G.H."/>
            <person name="Prochnik S.E."/>
            <person name="Smith C.D."/>
            <person name="Tupy J.L."/>
            <person name="Whitfield E.J."/>
            <person name="Bayraktaroglu L."/>
            <person name="Berman B.P."/>
            <person name="Bettencourt B.R."/>
            <person name="Celniker S.E."/>
            <person name="de Grey A.D.N.J."/>
            <person name="Drysdale R.A."/>
            <person name="Harris N.L."/>
            <person name="Richter J."/>
            <person name="Russo S."/>
            <person name="Schroeder A.J."/>
            <person name="Shu S.Q."/>
            <person name="Stapleton M."/>
            <person name="Yamada C."/>
            <person name="Ashburner M."/>
            <person name="Gelbart W.M."/>
            <person name="Rubin G.M."/>
            <person name="Lewis S.E."/>
        </authorList>
    </citation>
    <scope>GENOME REANNOTATION</scope>
    <source>
        <strain>Berkeley</strain>
    </source>
</reference>
<reference key="3">
    <citation type="journal article" date="2002" name="Genome Biol.">
        <title>A Drosophila full-length cDNA resource.</title>
        <authorList>
            <person name="Stapleton M."/>
            <person name="Carlson J.W."/>
            <person name="Brokstein P."/>
            <person name="Yu C."/>
            <person name="Champe M."/>
            <person name="George R.A."/>
            <person name="Guarin H."/>
            <person name="Kronmiller B."/>
            <person name="Pacleb J.M."/>
            <person name="Park S."/>
            <person name="Wan K.H."/>
            <person name="Rubin G.M."/>
            <person name="Celniker S.E."/>
        </authorList>
    </citation>
    <scope>NUCLEOTIDE SEQUENCE [LARGE SCALE MRNA]</scope>
    <source>
        <strain>Berkeley</strain>
        <tissue>Embryo</tissue>
    </source>
</reference>
<reference evidence="8" key="4">
    <citation type="journal article" date="1997" name="Proc. Natl. Acad. Sci. U.S.A.">
        <title>Characterization of the CHD family of proteins.</title>
        <authorList>
            <person name="Woodage T."/>
            <person name="Basrai M.A."/>
            <person name="Baxevanis A.D."/>
            <person name="Hieter P."/>
            <person name="Collins F.S."/>
        </authorList>
    </citation>
    <scope>NUCLEOTIDE SEQUENCE [MRNA] OF 1-812</scope>
</reference>
<reference key="5">
    <citation type="journal article" date="2008" name="Mol. Cell. Biol.">
        <title>dCHD3, a novel ATP-dependent chromatin remodeler associated with sites of active transcription.</title>
        <authorList>
            <person name="Murawska M."/>
            <person name="Kunert N."/>
            <person name="van Vugt J."/>
            <person name="Laengst G."/>
            <person name="Kremmer E."/>
            <person name="Logie C."/>
            <person name="Brehm A."/>
        </authorList>
    </citation>
    <scope>FUNCTION</scope>
    <scope>CATALYTIC ACTIVITY</scope>
    <scope>ACTIVITY REGULATION</scope>
    <scope>SUBUNIT</scope>
    <scope>SUBCELLULAR LOCATION</scope>
    <scope>DEVELOPMENTAL STAGE</scope>
    <scope>MUTAGENESIS OF 1-MET--ILE-80; 1-MET--ARG-240 AND 801-SER--MET-892</scope>
</reference>
<dbReference type="EC" id="3.6.4.-" evidence="6"/>
<dbReference type="EMBL" id="AE014296">
    <property type="protein sequence ID" value="AAF49162.2"/>
    <property type="molecule type" value="Genomic_DNA"/>
</dbReference>
<dbReference type="EMBL" id="AY071503">
    <property type="protein sequence ID" value="AAL49125.1"/>
    <property type="status" value="ALT_FRAME"/>
    <property type="molecule type" value="mRNA"/>
</dbReference>
<dbReference type="EMBL" id="AF007780">
    <property type="protein sequence ID" value="AAB87384.1"/>
    <property type="status" value="ALT_SEQ"/>
    <property type="molecule type" value="mRNA"/>
</dbReference>
<dbReference type="RefSeq" id="NP_649111.1">
    <property type="nucleotide sequence ID" value="NM_140854.3"/>
</dbReference>
<dbReference type="SMR" id="O16102"/>
<dbReference type="BioGRID" id="65382">
    <property type="interactions" value="2"/>
</dbReference>
<dbReference type="DIP" id="DIP-21327N"/>
<dbReference type="FunCoup" id="O16102">
    <property type="interactions" value="116"/>
</dbReference>
<dbReference type="IntAct" id="O16102">
    <property type="interactions" value="1"/>
</dbReference>
<dbReference type="STRING" id="7227.FBpp0074766"/>
<dbReference type="GlyGen" id="O16102">
    <property type="glycosylation" value="1 site"/>
</dbReference>
<dbReference type="PaxDb" id="7227-FBpp0074766"/>
<dbReference type="EnsemblMetazoa" id="FBtr0074998">
    <property type="protein sequence ID" value="FBpp0074766"/>
    <property type="gene ID" value="FBgn0023395"/>
</dbReference>
<dbReference type="GeneID" id="40111"/>
<dbReference type="KEGG" id="dme:Dmel_CG9594"/>
<dbReference type="UCSC" id="CG9594-RA">
    <property type="organism name" value="d. melanogaster"/>
</dbReference>
<dbReference type="AGR" id="FB:FBgn0023395"/>
<dbReference type="CTD" id="1107"/>
<dbReference type="FlyBase" id="FBgn0023395">
    <property type="gene designation" value="Chd3"/>
</dbReference>
<dbReference type="VEuPathDB" id="VectorBase:FBgn0023395"/>
<dbReference type="eggNOG" id="KOG0383">
    <property type="taxonomic scope" value="Eukaryota"/>
</dbReference>
<dbReference type="GeneTree" id="ENSGT00940000169383"/>
<dbReference type="HOGENOM" id="CLU_000315_8_4_1"/>
<dbReference type="InParanoid" id="O16102"/>
<dbReference type="OMA" id="SVYHRTC"/>
<dbReference type="OrthoDB" id="5857104at2759"/>
<dbReference type="PhylomeDB" id="O16102"/>
<dbReference type="Reactome" id="R-DME-3214815">
    <property type="pathway name" value="HDACs deacetylate histones"/>
</dbReference>
<dbReference type="Reactome" id="R-DME-6804758">
    <property type="pathway name" value="Regulation of TP53 Activity through Acetylation"/>
</dbReference>
<dbReference type="Reactome" id="R-DME-8943724">
    <property type="pathway name" value="Regulation of PTEN gene transcription"/>
</dbReference>
<dbReference type="Reactome" id="R-DME-9031628">
    <property type="pathway name" value="NGF-stimulated transcription"/>
</dbReference>
<dbReference type="BioGRID-ORCS" id="40111">
    <property type="hits" value="0 hits in 3 CRISPR screens"/>
</dbReference>
<dbReference type="GenomeRNAi" id="40111"/>
<dbReference type="PRO" id="PR:O16102"/>
<dbReference type="Proteomes" id="UP000000803">
    <property type="component" value="Chromosome 3L"/>
</dbReference>
<dbReference type="Bgee" id="FBgn0023395">
    <property type="expression patterns" value="Expressed in spermatogonium in testis and 24 other cell types or tissues"/>
</dbReference>
<dbReference type="ExpressionAtlas" id="O16102">
    <property type="expression patterns" value="baseline and differential"/>
</dbReference>
<dbReference type="GO" id="GO:0000785">
    <property type="term" value="C:chromatin"/>
    <property type="evidence" value="ECO:0000318"/>
    <property type="project" value="GO_Central"/>
</dbReference>
<dbReference type="GO" id="GO:0000791">
    <property type="term" value="C:euchromatin"/>
    <property type="evidence" value="ECO:0000314"/>
    <property type="project" value="FlyBase"/>
</dbReference>
<dbReference type="GO" id="GO:0005634">
    <property type="term" value="C:nucleus"/>
    <property type="evidence" value="ECO:0000314"/>
    <property type="project" value="FlyBase"/>
</dbReference>
<dbReference type="GO" id="GO:0016581">
    <property type="term" value="C:NuRD complex"/>
    <property type="evidence" value="ECO:0000250"/>
    <property type="project" value="UniProtKB"/>
</dbReference>
<dbReference type="GO" id="GO:0005524">
    <property type="term" value="F:ATP binding"/>
    <property type="evidence" value="ECO:0007669"/>
    <property type="project" value="UniProtKB-KW"/>
</dbReference>
<dbReference type="GO" id="GO:0016887">
    <property type="term" value="F:ATP hydrolysis activity"/>
    <property type="evidence" value="ECO:0000314"/>
    <property type="project" value="FlyBase"/>
</dbReference>
<dbReference type="GO" id="GO:0140658">
    <property type="term" value="F:ATP-dependent chromatin remodeler activity"/>
    <property type="evidence" value="ECO:0000314"/>
    <property type="project" value="FlyBase"/>
</dbReference>
<dbReference type="GO" id="GO:0003682">
    <property type="term" value="F:chromatin binding"/>
    <property type="evidence" value="ECO:0000318"/>
    <property type="project" value="GO_Central"/>
</dbReference>
<dbReference type="GO" id="GO:0003677">
    <property type="term" value="F:DNA binding"/>
    <property type="evidence" value="ECO:0000318"/>
    <property type="project" value="GO_Central"/>
</dbReference>
<dbReference type="GO" id="GO:0004386">
    <property type="term" value="F:helicase activity"/>
    <property type="evidence" value="ECO:0007669"/>
    <property type="project" value="UniProtKB-KW"/>
</dbReference>
<dbReference type="GO" id="GO:0042393">
    <property type="term" value="F:histone binding"/>
    <property type="evidence" value="ECO:0000318"/>
    <property type="project" value="GO_Central"/>
</dbReference>
<dbReference type="GO" id="GO:0008270">
    <property type="term" value="F:zinc ion binding"/>
    <property type="evidence" value="ECO:0007669"/>
    <property type="project" value="UniProtKB-KW"/>
</dbReference>
<dbReference type="GO" id="GO:0006325">
    <property type="term" value="P:chromatin organization"/>
    <property type="evidence" value="ECO:0000303"/>
    <property type="project" value="UniProtKB"/>
</dbReference>
<dbReference type="GO" id="GO:0006338">
    <property type="term" value="P:chromatin remodeling"/>
    <property type="evidence" value="ECO:0000318"/>
    <property type="project" value="GO_Central"/>
</dbReference>
<dbReference type="GO" id="GO:0034728">
    <property type="term" value="P:nucleosome organization"/>
    <property type="evidence" value="ECO:0000314"/>
    <property type="project" value="FlyBase"/>
</dbReference>
<dbReference type="CDD" id="cd18662">
    <property type="entry name" value="CD2_tandem_CHD3-4_like"/>
    <property type="match status" value="1"/>
</dbReference>
<dbReference type="CDD" id="cd15532">
    <property type="entry name" value="PHD2_CHD_II"/>
    <property type="match status" value="1"/>
</dbReference>
<dbReference type="CDD" id="cd18793">
    <property type="entry name" value="SF2_C_SNF"/>
    <property type="match status" value="1"/>
</dbReference>
<dbReference type="FunFam" id="3.40.50.300:FF:000015">
    <property type="entry name" value="chromodomain-helicase-DNA-binding protein 9 isoform X1"/>
    <property type="match status" value="1"/>
</dbReference>
<dbReference type="Gene3D" id="2.40.50.40">
    <property type="match status" value="2"/>
</dbReference>
<dbReference type="Gene3D" id="3.40.50.300">
    <property type="entry name" value="P-loop containing nucleotide triphosphate hydrolases"/>
    <property type="match status" value="1"/>
</dbReference>
<dbReference type="Gene3D" id="3.40.50.10810">
    <property type="entry name" value="Tandem AAA-ATPase domain"/>
    <property type="match status" value="1"/>
</dbReference>
<dbReference type="Gene3D" id="3.30.40.10">
    <property type="entry name" value="Zinc/RING finger domain, C3HC4 (zinc finger)"/>
    <property type="match status" value="1"/>
</dbReference>
<dbReference type="InterPro" id="IPR016197">
    <property type="entry name" value="Chromo-like_dom_sf"/>
</dbReference>
<dbReference type="InterPro" id="IPR000953">
    <property type="entry name" value="Chromo/chromo_shadow_dom"/>
</dbReference>
<dbReference type="InterPro" id="IPR023780">
    <property type="entry name" value="Chromo_domain"/>
</dbReference>
<dbReference type="InterPro" id="IPR002464">
    <property type="entry name" value="DNA/RNA_helicase_DEAH_CS"/>
</dbReference>
<dbReference type="InterPro" id="IPR014001">
    <property type="entry name" value="Helicase_ATP-bd"/>
</dbReference>
<dbReference type="InterPro" id="IPR001650">
    <property type="entry name" value="Helicase_C-like"/>
</dbReference>
<dbReference type="InterPro" id="IPR027417">
    <property type="entry name" value="P-loop_NTPase"/>
</dbReference>
<dbReference type="InterPro" id="IPR038718">
    <property type="entry name" value="SNF2-like_sf"/>
</dbReference>
<dbReference type="InterPro" id="IPR049730">
    <property type="entry name" value="SNF2/RAD54-like_C"/>
</dbReference>
<dbReference type="InterPro" id="IPR000330">
    <property type="entry name" value="SNF2_N"/>
</dbReference>
<dbReference type="InterPro" id="IPR019786">
    <property type="entry name" value="Zinc_finger_PHD-type_CS"/>
</dbReference>
<dbReference type="InterPro" id="IPR001965">
    <property type="entry name" value="Znf_PHD"/>
</dbReference>
<dbReference type="InterPro" id="IPR019787">
    <property type="entry name" value="Znf_PHD-finger"/>
</dbReference>
<dbReference type="InterPro" id="IPR013083">
    <property type="entry name" value="Znf_RING/FYVE/PHD"/>
</dbReference>
<dbReference type="PANTHER" id="PTHR45623:SF17">
    <property type="entry name" value="CHROMODOMAIN-HELICASE-DNA-BINDING PROTEIN 3-RELATED"/>
    <property type="match status" value="1"/>
</dbReference>
<dbReference type="PANTHER" id="PTHR45623">
    <property type="entry name" value="CHROMODOMAIN-HELICASE-DNA-BINDING PROTEIN 3-RELATED-RELATED"/>
    <property type="match status" value="1"/>
</dbReference>
<dbReference type="Pfam" id="PF00385">
    <property type="entry name" value="Chromo"/>
    <property type="match status" value="1"/>
</dbReference>
<dbReference type="Pfam" id="PF00271">
    <property type="entry name" value="Helicase_C"/>
    <property type="match status" value="1"/>
</dbReference>
<dbReference type="Pfam" id="PF00628">
    <property type="entry name" value="PHD"/>
    <property type="match status" value="1"/>
</dbReference>
<dbReference type="Pfam" id="PF00176">
    <property type="entry name" value="SNF2-rel_dom"/>
    <property type="match status" value="1"/>
</dbReference>
<dbReference type="SMART" id="SM00298">
    <property type="entry name" value="CHROMO"/>
    <property type="match status" value="2"/>
</dbReference>
<dbReference type="SMART" id="SM00487">
    <property type="entry name" value="DEXDc"/>
    <property type="match status" value="1"/>
</dbReference>
<dbReference type="SMART" id="SM00490">
    <property type="entry name" value="HELICc"/>
    <property type="match status" value="1"/>
</dbReference>
<dbReference type="SMART" id="SM00249">
    <property type="entry name" value="PHD"/>
    <property type="match status" value="1"/>
</dbReference>
<dbReference type="SUPFAM" id="SSF54160">
    <property type="entry name" value="Chromo domain-like"/>
    <property type="match status" value="2"/>
</dbReference>
<dbReference type="SUPFAM" id="SSF52540">
    <property type="entry name" value="P-loop containing nucleoside triphosphate hydrolases"/>
    <property type="match status" value="2"/>
</dbReference>
<dbReference type="PROSITE" id="PS50013">
    <property type="entry name" value="CHROMO_2"/>
    <property type="match status" value="2"/>
</dbReference>
<dbReference type="PROSITE" id="PS00690">
    <property type="entry name" value="DEAH_ATP_HELICASE"/>
    <property type="match status" value="1"/>
</dbReference>
<dbReference type="PROSITE" id="PS51192">
    <property type="entry name" value="HELICASE_ATP_BIND_1"/>
    <property type="match status" value="1"/>
</dbReference>
<dbReference type="PROSITE" id="PS51194">
    <property type="entry name" value="HELICASE_CTER"/>
    <property type="match status" value="1"/>
</dbReference>
<dbReference type="PROSITE" id="PS01359">
    <property type="entry name" value="ZF_PHD_1"/>
    <property type="match status" value="1"/>
</dbReference>
<dbReference type="PROSITE" id="PS50016">
    <property type="entry name" value="ZF_PHD_2"/>
    <property type="match status" value="1"/>
</dbReference>
<protein>
    <recommendedName>
        <fullName evidence="7">Chromodomain-helicase-DNA-binding protein 3</fullName>
        <ecNumber evidence="6">3.6.4.-</ecNumber>
    </recommendedName>
    <alternativeName>
        <fullName evidence="9">ATP-dependent helicase Chd3</fullName>
    </alternativeName>
</protein>
<keyword id="KW-0010">Activator</keyword>
<keyword id="KW-0067">ATP-binding</keyword>
<keyword id="KW-0158">Chromosome</keyword>
<keyword id="KW-0238">DNA-binding</keyword>
<keyword id="KW-0378">Hydrolase</keyword>
<keyword id="KW-0479">Metal-binding</keyword>
<keyword id="KW-0547">Nucleotide-binding</keyword>
<keyword id="KW-0539">Nucleus</keyword>
<keyword id="KW-1185">Reference proteome</keyword>
<keyword id="KW-0677">Repeat</keyword>
<keyword id="KW-0804">Transcription</keyword>
<keyword id="KW-0805">Transcription regulation</keyword>
<keyword id="KW-0862">Zinc</keyword>
<keyword id="KW-0863">Zinc-finger</keyword>